<keyword id="KW-0560">Oxidoreductase</keyword>
<keyword id="KW-0576">Peroxisome</keyword>
<keyword id="KW-0659">Purine metabolism</keyword>
<keyword id="KW-1185">Reference proteome</keyword>
<organism>
    <name type="scientific">Emericella nidulans (strain FGSC A4 / ATCC 38163 / CBS 112.46 / NRRL 194 / M139)</name>
    <name type="common">Aspergillus nidulans</name>
    <dbReference type="NCBI Taxonomy" id="227321"/>
    <lineage>
        <taxon>Eukaryota</taxon>
        <taxon>Fungi</taxon>
        <taxon>Dikarya</taxon>
        <taxon>Ascomycota</taxon>
        <taxon>Pezizomycotina</taxon>
        <taxon>Eurotiomycetes</taxon>
        <taxon>Eurotiomycetidae</taxon>
        <taxon>Eurotiales</taxon>
        <taxon>Aspergillaceae</taxon>
        <taxon>Aspergillus</taxon>
        <taxon>Aspergillus subgen. Nidulantes</taxon>
    </lineage>
</organism>
<protein>
    <recommendedName>
        <fullName>Uricase</fullName>
        <ecNumber evidence="4">1.7.3.3</ecNumber>
    </recommendedName>
    <alternativeName>
        <fullName>Urate oxidase</fullName>
    </alternativeName>
</protein>
<comment type="function">
    <text evidence="4">Catalyzes the oxidation of uric acid to 5-hydroxyisourate, which is further processed to form (S)-allantoin.</text>
</comment>
<comment type="catalytic activity">
    <reaction evidence="4">
        <text>urate + O2 + H2O = 5-hydroxyisourate + H2O2</text>
        <dbReference type="Rhea" id="RHEA:21368"/>
        <dbReference type="ChEBI" id="CHEBI:15377"/>
        <dbReference type="ChEBI" id="CHEBI:15379"/>
        <dbReference type="ChEBI" id="CHEBI:16240"/>
        <dbReference type="ChEBI" id="CHEBI:17775"/>
        <dbReference type="ChEBI" id="CHEBI:18072"/>
        <dbReference type="EC" id="1.7.3.3"/>
    </reaction>
</comment>
<comment type="pathway">
    <text>Purine metabolism; urate degradation; (S)-allantoin from urate: step 1/3.</text>
</comment>
<comment type="subcellular location">
    <subcellularLocation>
        <location>Peroxisome</location>
    </subcellularLocation>
</comment>
<comment type="similarity">
    <text evidence="5">Belongs to the uricase family.</text>
</comment>
<dbReference type="EC" id="1.7.3.3" evidence="4"/>
<dbReference type="EMBL" id="X72210">
    <property type="protein sequence ID" value="CAA51009.1"/>
    <property type="molecule type" value="Genomic_DNA"/>
</dbReference>
<dbReference type="EMBL" id="AACD01000194">
    <property type="protein sequence ID" value="EAA57588.1"/>
    <property type="molecule type" value="Genomic_DNA"/>
</dbReference>
<dbReference type="EMBL" id="BN001301">
    <property type="protein sequence ID" value="CBF70468.1"/>
    <property type="molecule type" value="Genomic_DNA"/>
</dbReference>
<dbReference type="PIR" id="A48879">
    <property type="entry name" value="A48879"/>
</dbReference>
<dbReference type="RefSeq" id="XP_868852.1">
    <property type="nucleotide sequence ID" value="XM_863759.1"/>
</dbReference>
<dbReference type="SMR" id="P33282"/>
<dbReference type="STRING" id="227321.P33282"/>
<dbReference type="EnsemblFungi" id="CBF70468">
    <property type="protein sequence ID" value="CBF70468"/>
    <property type="gene ID" value="ANIA_09470"/>
</dbReference>
<dbReference type="KEGG" id="ani:ANIA_09470"/>
<dbReference type="VEuPathDB" id="FungiDB:AN9470"/>
<dbReference type="eggNOG" id="KOG1599">
    <property type="taxonomic scope" value="Eukaryota"/>
</dbReference>
<dbReference type="HOGENOM" id="CLU_048151_0_0_1"/>
<dbReference type="InParanoid" id="P33282"/>
<dbReference type="OMA" id="ATMYKMS"/>
<dbReference type="OrthoDB" id="9992118at2759"/>
<dbReference type="UniPathway" id="UPA00394">
    <property type="reaction ID" value="UER00650"/>
</dbReference>
<dbReference type="Proteomes" id="UP000000560">
    <property type="component" value="Chromosome I"/>
</dbReference>
<dbReference type="GO" id="GO:0005576">
    <property type="term" value="C:extracellular region"/>
    <property type="evidence" value="ECO:0000314"/>
    <property type="project" value="AspGD"/>
</dbReference>
<dbReference type="GO" id="GO:0005777">
    <property type="term" value="C:peroxisome"/>
    <property type="evidence" value="ECO:0000318"/>
    <property type="project" value="GO_Central"/>
</dbReference>
<dbReference type="GO" id="GO:0004846">
    <property type="term" value="F:urate oxidase activity"/>
    <property type="evidence" value="ECO:0000315"/>
    <property type="project" value="AspGD"/>
</dbReference>
<dbReference type="GO" id="GO:0006145">
    <property type="term" value="P:purine nucleobase catabolic process"/>
    <property type="evidence" value="ECO:0000315"/>
    <property type="project" value="AspGD"/>
</dbReference>
<dbReference type="GO" id="GO:0019628">
    <property type="term" value="P:urate catabolic process"/>
    <property type="evidence" value="ECO:0000318"/>
    <property type="project" value="GO_Central"/>
</dbReference>
<dbReference type="CDD" id="cd00445">
    <property type="entry name" value="Uricase"/>
    <property type="match status" value="1"/>
</dbReference>
<dbReference type="FunFam" id="3.10.270.10:FF:000001">
    <property type="entry name" value="Uricase"/>
    <property type="match status" value="1"/>
</dbReference>
<dbReference type="Gene3D" id="3.10.270.10">
    <property type="entry name" value="Urate Oxidase"/>
    <property type="match status" value="1"/>
</dbReference>
<dbReference type="InterPro" id="IPR002042">
    <property type="entry name" value="Uricase"/>
</dbReference>
<dbReference type="InterPro" id="IPR019842">
    <property type="entry name" value="Uricase_CS"/>
</dbReference>
<dbReference type="NCBIfam" id="TIGR03383">
    <property type="entry name" value="urate_oxi"/>
    <property type="match status" value="1"/>
</dbReference>
<dbReference type="PANTHER" id="PTHR42874">
    <property type="entry name" value="URICASE"/>
    <property type="match status" value="1"/>
</dbReference>
<dbReference type="PANTHER" id="PTHR42874:SF1">
    <property type="entry name" value="URICASE"/>
    <property type="match status" value="1"/>
</dbReference>
<dbReference type="Pfam" id="PF01014">
    <property type="entry name" value="Uricase"/>
    <property type="match status" value="2"/>
</dbReference>
<dbReference type="PIRSF" id="PIRSF000241">
    <property type="entry name" value="Urate_oxidase"/>
    <property type="match status" value="1"/>
</dbReference>
<dbReference type="PRINTS" id="PR00093">
    <property type="entry name" value="URICASE"/>
</dbReference>
<dbReference type="SUPFAM" id="SSF55620">
    <property type="entry name" value="Tetrahydrobiopterin biosynthesis enzymes-like"/>
    <property type="match status" value="2"/>
</dbReference>
<dbReference type="PROSITE" id="PS00366">
    <property type="entry name" value="URICASE"/>
    <property type="match status" value="1"/>
</dbReference>
<feature type="chain" id="PRO_0000165996" description="Uricase">
    <location>
        <begin position="1"/>
        <end position="301"/>
    </location>
</feature>
<feature type="short sequence motif" description="Microbody targeting signal" evidence="3">
    <location>
        <begin position="299"/>
        <end position="301"/>
    </location>
</feature>
<feature type="active site" description="Charge relay system" evidence="1">
    <location>
        <position position="11"/>
    </location>
</feature>
<feature type="active site" description="Charge relay system" evidence="1">
    <location>
        <position position="58"/>
    </location>
</feature>
<feature type="active site" description="Charge relay system" evidence="1">
    <location>
        <position position="257"/>
    </location>
</feature>
<feature type="binding site" evidence="2">
    <location>
        <position position="58"/>
    </location>
    <ligand>
        <name>urate</name>
        <dbReference type="ChEBI" id="CHEBI:17775"/>
    </ligand>
</feature>
<feature type="binding site" evidence="2">
    <location>
        <position position="59"/>
    </location>
    <ligand>
        <name>urate</name>
        <dbReference type="ChEBI" id="CHEBI:17775"/>
    </ligand>
</feature>
<feature type="binding site" evidence="2">
    <location>
        <position position="160"/>
    </location>
    <ligand>
        <name>urate</name>
        <dbReference type="ChEBI" id="CHEBI:17775"/>
    </ligand>
</feature>
<feature type="binding site" evidence="2">
    <location>
        <position position="177"/>
    </location>
    <ligand>
        <name>urate</name>
        <dbReference type="ChEBI" id="CHEBI:17775"/>
    </ligand>
</feature>
<feature type="binding site" evidence="2">
    <location>
        <position position="228"/>
    </location>
    <ligand>
        <name>urate</name>
        <dbReference type="ChEBI" id="CHEBI:17775"/>
    </ligand>
</feature>
<feature type="binding site" evidence="2">
    <location>
        <position position="229"/>
    </location>
    <ligand>
        <name>urate</name>
        <dbReference type="ChEBI" id="CHEBI:17775"/>
    </ligand>
</feature>
<feature type="binding site" evidence="2">
    <location>
        <position position="255"/>
    </location>
    <ligand>
        <name>urate</name>
        <dbReference type="ChEBI" id="CHEBI:17775"/>
    </ligand>
</feature>
<proteinExistence type="evidence at protein level"/>
<accession>P33282</accession>
<accession>C8V3D6</accession>
<accession>Q5AQG0</accession>
<name>URIC_EMENI</name>
<gene>
    <name type="primary">uaZ</name>
    <name type="ORF">AN9470</name>
</gene>
<reference key="1">
    <citation type="journal article" date="1993" name="J. Biol. Chem.">
        <title>Sequence, regulation, and mutational analysis of the gene encoding urate oxidase in Aspergillus nidulans.</title>
        <authorList>
            <person name="Oestreicher N."/>
            <person name="Scazzocchio C."/>
        </authorList>
    </citation>
    <scope>NUCLEOTIDE SEQUENCE [GENOMIC DNA]</scope>
    <scope>FUNCTION</scope>
    <scope>CATALYTIC ACTIVITY</scope>
</reference>
<reference key="2">
    <citation type="journal article" date="2005" name="Nature">
        <title>Sequencing of Aspergillus nidulans and comparative analysis with A. fumigatus and A. oryzae.</title>
        <authorList>
            <person name="Galagan J.E."/>
            <person name="Calvo S.E."/>
            <person name="Cuomo C."/>
            <person name="Ma L.-J."/>
            <person name="Wortman J.R."/>
            <person name="Batzoglou S."/>
            <person name="Lee S.-I."/>
            <person name="Bastuerkmen M."/>
            <person name="Spevak C.C."/>
            <person name="Clutterbuck J."/>
            <person name="Kapitonov V."/>
            <person name="Jurka J."/>
            <person name="Scazzocchio C."/>
            <person name="Farman M.L."/>
            <person name="Butler J."/>
            <person name="Purcell S."/>
            <person name="Harris S."/>
            <person name="Braus G.H."/>
            <person name="Draht O."/>
            <person name="Busch S."/>
            <person name="D'Enfert C."/>
            <person name="Bouchier C."/>
            <person name="Goldman G.H."/>
            <person name="Bell-Pedersen D."/>
            <person name="Griffiths-Jones S."/>
            <person name="Doonan J.H."/>
            <person name="Yu J."/>
            <person name="Vienken K."/>
            <person name="Pain A."/>
            <person name="Freitag M."/>
            <person name="Selker E.U."/>
            <person name="Archer D.B."/>
            <person name="Penalva M.A."/>
            <person name="Oakley B.R."/>
            <person name="Momany M."/>
            <person name="Tanaka T."/>
            <person name="Kumagai T."/>
            <person name="Asai K."/>
            <person name="Machida M."/>
            <person name="Nierman W.C."/>
            <person name="Denning D.W."/>
            <person name="Caddick M.X."/>
            <person name="Hynes M."/>
            <person name="Paoletti M."/>
            <person name="Fischer R."/>
            <person name="Miller B.L."/>
            <person name="Dyer P.S."/>
            <person name="Sachs M.S."/>
            <person name="Osmani S.A."/>
            <person name="Birren B.W."/>
        </authorList>
    </citation>
    <scope>NUCLEOTIDE SEQUENCE [LARGE SCALE GENOMIC DNA]</scope>
    <source>
        <strain>FGSC A4 / ATCC 38163 / CBS 112.46 / NRRL 194 / M139</strain>
    </source>
</reference>
<reference key="3">
    <citation type="journal article" date="2009" name="Fungal Genet. Biol.">
        <title>The 2008 update of the Aspergillus nidulans genome annotation: a community effort.</title>
        <authorList>
            <person name="Wortman J.R."/>
            <person name="Gilsenan J.M."/>
            <person name="Joardar V."/>
            <person name="Deegan J."/>
            <person name="Clutterbuck J."/>
            <person name="Andersen M.R."/>
            <person name="Archer D."/>
            <person name="Bencina M."/>
            <person name="Braus G."/>
            <person name="Coutinho P."/>
            <person name="von Dohren H."/>
            <person name="Doonan J."/>
            <person name="Driessen A.J."/>
            <person name="Durek P."/>
            <person name="Espeso E."/>
            <person name="Fekete E."/>
            <person name="Flipphi M."/>
            <person name="Estrada C.G."/>
            <person name="Geysens S."/>
            <person name="Goldman G."/>
            <person name="de Groot P.W."/>
            <person name="Hansen K."/>
            <person name="Harris S.D."/>
            <person name="Heinekamp T."/>
            <person name="Helmstaedt K."/>
            <person name="Henrissat B."/>
            <person name="Hofmann G."/>
            <person name="Homan T."/>
            <person name="Horio T."/>
            <person name="Horiuchi H."/>
            <person name="James S."/>
            <person name="Jones M."/>
            <person name="Karaffa L."/>
            <person name="Karanyi Z."/>
            <person name="Kato M."/>
            <person name="Keller N."/>
            <person name="Kelly D.E."/>
            <person name="Kiel J.A."/>
            <person name="Kim J.M."/>
            <person name="van der Klei I.J."/>
            <person name="Klis F.M."/>
            <person name="Kovalchuk A."/>
            <person name="Krasevec N."/>
            <person name="Kubicek C.P."/>
            <person name="Liu B."/>
            <person name="Maccabe A."/>
            <person name="Meyer V."/>
            <person name="Mirabito P."/>
            <person name="Miskei M."/>
            <person name="Mos M."/>
            <person name="Mullins J."/>
            <person name="Nelson D.R."/>
            <person name="Nielsen J."/>
            <person name="Oakley B.R."/>
            <person name="Osmani S.A."/>
            <person name="Pakula T."/>
            <person name="Paszewski A."/>
            <person name="Paulsen I."/>
            <person name="Pilsyk S."/>
            <person name="Pocsi I."/>
            <person name="Punt P.J."/>
            <person name="Ram A.F."/>
            <person name="Ren Q."/>
            <person name="Robellet X."/>
            <person name="Robson G."/>
            <person name="Seiboth B."/>
            <person name="van Solingen P."/>
            <person name="Specht T."/>
            <person name="Sun J."/>
            <person name="Taheri-Talesh N."/>
            <person name="Takeshita N."/>
            <person name="Ussery D."/>
            <person name="vanKuyk P.A."/>
            <person name="Visser H."/>
            <person name="van de Vondervoort P.J."/>
            <person name="de Vries R.P."/>
            <person name="Walton J."/>
            <person name="Xiang X."/>
            <person name="Xiong Y."/>
            <person name="Zeng A.P."/>
            <person name="Brandt B.W."/>
            <person name="Cornell M.J."/>
            <person name="van den Hondel C.A."/>
            <person name="Visser J."/>
            <person name="Oliver S.G."/>
            <person name="Turner G."/>
        </authorList>
    </citation>
    <scope>GENOME REANNOTATION</scope>
    <source>
        <strain>FGSC A4 / ATCC 38163 / CBS 112.46 / NRRL 194 / M139</strain>
    </source>
</reference>
<evidence type="ECO:0000250" key="1">
    <source>
        <dbReference type="UniProtKB" id="D0VWQ1"/>
    </source>
</evidence>
<evidence type="ECO:0000250" key="2">
    <source>
        <dbReference type="UniProtKB" id="Q00511"/>
    </source>
</evidence>
<evidence type="ECO:0000255" key="3"/>
<evidence type="ECO:0000269" key="4">
    <source>
    </source>
</evidence>
<evidence type="ECO:0000305" key="5"/>
<sequence>MSTVAAARYGKDNVRVYKVHKDPKTGVQTVTEMTVCVLLEGEIDTSYTKADNSVIVATDSIKNTIFILAKQNPVTPPELFGSILGTHFINKYKHIHVAHTNIITHRWTRLNIDGKPHSHSFVRDSEETRNVQVDVTEGVGIDIKSSINKLTVLKSTGSQFWGFVRDEYTTLPEVWDRILSTDVEATWAWKRFSGLDEVRGNVPKFDETWEAARNITLKTFAEEESASVQATMYKMGEQILAYQPLLETVEYSLPNKHYFEIDLSWHKGLKNTGKDAEVFVPQTNPNGLIKCTVGRKSKAKL</sequence>